<comment type="subunit">
    <text evidence="1">Homodimer.</text>
</comment>
<comment type="subcellular location">
    <subcellularLocation>
        <location evidence="1">Cytoplasm</location>
    </subcellularLocation>
</comment>
<comment type="similarity">
    <text evidence="1">Belongs to the CutC family.</text>
</comment>
<comment type="caution">
    <text evidence="1">Once thought to be involved in copper homeostasis, experiments in E.coli have shown this is not the case.</text>
</comment>
<comment type="sequence caution" evidence="2">
    <conflict type="erroneous initiation">
        <sequence resource="EMBL-CDS" id="AAG56864"/>
    </conflict>
    <text>Truncated N-terminus.</text>
</comment>
<dbReference type="EMBL" id="AE005174">
    <property type="protein sequence ID" value="AAG56864.1"/>
    <property type="status" value="ALT_INIT"/>
    <property type="molecule type" value="Genomic_DNA"/>
</dbReference>
<dbReference type="EMBL" id="BA000007">
    <property type="protein sequence ID" value="BAB36007.2"/>
    <property type="molecule type" value="Genomic_DNA"/>
</dbReference>
<dbReference type="PIR" id="D85800">
    <property type="entry name" value="D85800"/>
</dbReference>
<dbReference type="PIR" id="H90951">
    <property type="entry name" value="H90951"/>
</dbReference>
<dbReference type="RefSeq" id="NP_310611.2">
    <property type="nucleotide sequence ID" value="NC_002695.1"/>
</dbReference>
<dbReference type="RefSeq" id="WP_001185748.1">
    <property type="nucleotide sequence ID" value="NZ_VOAI01000010.1"/>
</dbReference>
<dbReference type="SMR" id="Q8XCH4"/>
<dbReference type="STRING" id="155864.Z2927"/>
<dbReference type="GeneID" id="912830"/>
<dbReference type="KEGG" id="ece:Z2927"/>
<dbReference type="KEGG" id="ecs:ECs_2584"/>
<dbReference type="PATRIC" id="fig|386585.9.peg.2709"/>
<dbReference type="eggNOG" id="COG3142">
    <property type="taxonomic scope" value="Bacteria"/>
</dbReference>
<dbReference type="HOGENOM" id="CLU_1774599_0_0_6"/>
<dbReference type="OMA" id="HRAFDQC"/>
<dbReference type="Proteomes" id="UP000000558">
    <property type="component" value="Chromosome"/>
</dbReference>
<dbReference type="Proteomes" id="UP000002519">
    <property type="component" value="Chromosome"/>
</dbReference>
<dbReference type="GO" id="GO:0005737">
    <property type="term" value="C:cytoplasm"/>
    <property type="evidence" value="ECO:0007669"/>
    <property type="project" value="UniProtKB-SubCell"/>
</dbReference>
<dbReference type="GO" id="GO:0005507">
    <property type="term" value="F:copper ion binding"/>
    <property type="evidence" value="ECO:0007669"/>
    <property type="project" value="TreeGrafter"/>
</dbReference>
<dbReference type="FunFam" id="3.20.20.380:FF:000001">
    <property type="entry name" value="Copper homeostasis protein CutC"/>
    <property type="match status" value="1"/>
</dbReference>
<dbReference type="Gene3D" id="3.20.20.380">
    <property type="entry name" value="Copper homeostasis (CutC) domain"/>
    <property type="match status" value="1"/>
</dbReference>
<dbReference type="HAMAP" id="MF_00795">
    <property type="entry name" value="CutC"/>
    <property type="match status" value="1"/>
</dbReference>
<dbReference type="InterPro" id="IPR005627">
    <property type="entry name" value="CutC-like"/>
</dbReference>
<dbReference type="InterPro" id="IPR036822">
    <property type="entry name" value="CutC-like_dom_sf"/>
</dbReference>
<dbReference type="NCBIfam" id="NF008603">
    <property type="entry name" value="PRK11572.1"/>
    <property type="match status" value="1"/>
</dbReference>
<dbReference type="PANTHER" id="PTHR12598">
    <property type="entry name" value="COPPER HOMEOSTASIS PROTEIN CUTC"/>
    <property type="match status" value="1"/>
</dbReference>
<dbReference type="PANTHER" id="PTHR12598:SF0">
    <property type="entry name" value="COPPER HOMEOSTASIS PROTEIN CUTC HOMOLOG"/>
    <property type="match status" value="1"/>
</dbReference>
<dbReference type="Pfam" id="PF03932">
    <property type="entry name" value="CutC"/>
    <property type="match status" value="1"/>
</dbReference>
<dbReference type="SUPFAM" id="SSF110395">
    <property type="entry name" value="CutC-like"/>
    <property type="match status" value="1"/>
</dbReference>
<sequence>MALLEICCYSMECALTAQQNGADRVELCAAPKEGGLTPSLGVLKSVRQRVTIPVHPIIRPRGGDFCYSDGEFAAILEDVRTVRELGFPGLVTGVLDVDGNVDMSRMEKIMAAAGPLAVTFHRAFDMCANPLNTLNNLAELGIARVLTSGQKSDALQGLSKIMELIAHRDAPIIMAGAGVRAENLHHFLDAGVLEVHSSAGAWQASPMRYRNQGLSMSSDAHADEYSRYVVDGAAVAEMKGIIERHQAK</sequence>
<keyword id="KW-0963">Cytoplasm</keyword>
<keyword id="KW-1185">Reference proteome</keyword>
<gene>
    <name evidence="1" type="primary">cutC</name>
    <name type="ordered locus">Z2927</name>
    <name type="ordered locus">ECs2584</name>
</gene>
<evidence type="ECO:0000255" key="1">
    <source>
        <dbReference type="HAMAP-Rule" id="MF_00795"/>
    </source>
</evidence>
<evidence type="ECO:0000305" key="2"/>
<protein>
    <recommendedName>
        <fullName evidence="1">PF03932 family protein CutC</fullName>
    </recommendedName>
</protein>
<proteinExistence type="inferred from homology"/>
<organism>
    <name type="scientific">Escherichia coli O157:H7</name>
    <dbReference type="NCBI Taxonomy" id="83334"/>
    <lineage>
        <taxon>Bacteria</taxon>
        <taxon>Pseudomonadati</taxon>
        <taxon>Pseudomonadota</taxon>
        <taxon>Gammaproteobacteria</taxon>
        <taxon>Enterobacterales</taxon>
        <taxon>Enterobacteriaceae</taxon>
        <taxon>Escherichia</taxon>
    </lineage>
</organism>
<reference key="1">
    <citation type="journal article" date="2001" name="Nature">
        <title>Genome sequence of enterohaemorrhagic Escherichia coli O157:H7.</title>
        <authorList>
            <person name="Perna N.T."/>
            <person name="Plunkett G. III"/>
            <person name="Burland V."/>
            <person name="Mau B."/>
            <person name="Glasner J.D."/>
            <person name="Rose D.J."/>
            <person name="Mayhew G.F."/>
            <person name="Evans P.S."/>
            <person name="Gregor J."/>
            <person name="Kirkpatrick H.A."/>
            <person name="Posfai G."/>
            <person name="Hackett J."/>
            <person name="Klink S."/>
            <person name="Boutin A."/>
            <person name="Shao Y."/>
            <person name="Miller L."/>
            <person name="Grotbeck E.J."/>
            <person name="Davis N.W."/>
            <person name="Lim A."/>
            <person name="Dimalanta E.T."/>
            <person name="Potamousis K."/>
            <person name="Apodaca J."/>
            <person name="Anantharaman T.S."/>
            <person name="Lin J."/>
            <person name="Yen G."/>
            <person name="Schwartz D.C."/>
            <person name="Welch R.A."/>
            <person name="Blattner F.R."/>
        </authorList>
    </citation>
    <scope>NUCLEOTIDE SEQUENCE [LARGE SCALE GENOMIC DNA]</scope>
    <source>
        <strain>O157:H7 / EDL933 / ATCC 700927 / EHEC</strain>
    </source>
</reference>
<reference key="2">
    <citation type="journal article" date="2001" name="DNA Res.">
        <title>Complete genome sequence of enterohemorrhagic Escherichia coli O157:H7 and genomic comparison with a laboratory strain K-12.</title>
        <authorList>
            <person name="Hayashi T."/>
            <person name="Makino K."/>
            <person name="Ohnishi M."/>
            <person name="Kurokawa K."/>
            <person name="Ishii K."/>
            <person name="Yokoyama K."/>
            <person name="Han C.-G."/>
            <person name="Ohtsubo E."/>
            <person name="Nakayama K."/>
            <person name="Murata T."/>
            <person name="Tanaka M."/>
            <person name="Tobe T."/>
            <person name="Iida T."/>
            <person name="Takami H."/>
            <person name="Honda T."/>
            <person name="Sasakawa C."/>
            <person name="Ogasawara N."/>
            <person name="Yasunaga T."/>
            <person name="Kuhara S."/>
            <person name="Shiba T."/>
            <person name="Hattori M."/>
            <person name="Shinagawa H."/>
        </authorList>
    </citation>
    <scope>NUCLEOTIDE SEQUENCE [LARGE SCALE GENOMIC DNA]</scope>
    <source>
        <strain>O157:H7 / Sakai / RIMD 0509952 / EHEC</strain>
    </source>
</reference>
<feature type="chain" id="PRO_0000215065" description="PF03932 family protein CutC">
    <location>
        <begin position="1"/>
        <end position="248"/>
    </location>
</feature>
<name>CUTC_ECO57</name>
<accession>Q8XCH4</accession>
<accession>Q7AD60</accession>